<accession>A6Q3Z7</accession>
<gene>
    <name evidence="2" type="primary">ddl</name>
    <name type="ordered locus">NIS_1097</name>
</gene>
<proteinExistence type="inferred from homology"/>
<comment type="function">
    <text evidence="2">Cell wall formation.</text>
</comment>
<comment type="catalytic activity">
    <reaction evidence="2">
        <text>2 D-alanine + ATP = D-alanyl-D-alanine + ADP + phosphate + H(+)</text>
        <dbReference type="Rhea" id="RHEA:11224"/>
        <dbReference type="ChEBI" id="CHEBI:15378"/>
        <dbReference type="ChEBI" id="CHEBI:30616"/>
        <dbReference type="ChEBI" id="CHEBI:43474"/>
        <dbReference type="ChEBI" id="CHEBI:57416"/>
        <dbReference type="ChEBI" id="CHEBI:57822"/>
        <dbReference type="ChEBI" id="CHEBI:456216"/>
        <dbReference type="EC" id="6.3.2.4"/>
    </reaction>
</comment>
<comment type="cofactor">
    <cofactor evidence="1">
        <name>Mg(2+)</name>
        <dbReference type="ChEBI" id="CHEBI:18420"/>
    </cofactor>
    <cofactor evidence="1">
        <name>Mn(2+)</name>
        <dbReference type="ChEBI" id="CHEBI:29035"/>
    </cofactor>
    <text evidence="1">Binds 2 magnesium or manganese ions per subunit.</text>
</comment>
<comment type="pathway">
    <text evidence="2">Cell wall biogenesis; peptidoglycan biosynthesis.</text>
</comment>
<comment type="subcellular location">
    <subcellularLocation>
        <location evidence="2">Cytoplasm</location>
    </subcellularLocation>
</comment>
<comment type="similarity">
    <text evidence="2">Belongs to the D-alanine--D-alanine ligase family.</text>
</comment>
<reference key="1">
    <citation type="journal article" date="2007" name="Proc. Natl. Acad. Sci. U.S.A.">
        <title>Deep-sea vent epsilon-proteobacterial genomes provide insights into emergence of pathogens.</title>
        <authorList>
            <person name="Nakagawa S."/>
            <person name="Takaki Y."/>
            <person name="Shimamura S."/>
            <person name="Reysenbach A.-L."/>
            <person name="Takai K."/>
            <person name="Horikoshi K."/>
        </authorList>
    </citation>
    <scope>NUCLEOTIDE SEQUENCE [LARGE SCALE GENOMIC DNA]</scope>
    <source>
        <strain>SB155-2</strain>
    </source>
</reference>
<keyword id="KW-0067">ATP-binding</keyword>
<keyword id="KW-0133">Cell shape</keyword>
<keyword id="KW-0961">Cell wall biogenesis/degradation</keyword>
<keyword id="KW-0963">Cytoplasm</keyword>
<keyword id="KW-0436">Ligase</keyword>
<keyword id="KW-0460">Magnesium</keyword>
<keyword id="KW-0464">Manganese</keyword>
<keyword id="KW-0479">Metal-binding</keyword>
<keyword id="KW-0547">Nucleotide-binding</keyword>
<keyword id="KW-0573">Peptidoglycan synthesis</keyword>
<keyword id="KW-1185">Reference proteome</keyword>
<feature type="chain" id="PRO_1000074779" description="D-alanine--D-alanine ligase">
    <location>
        <begin position="1"/>
        <end position="342"/>
    </location>
</feature>
<feature type="domain" description="ATP-grasp" evidence="2">
    <location>
        <begin position="132"/>
        <end position="326"/>
    </location>
</feature>
<feature type="binding site" evidence="2">
    <location>
        <begin position="159"/>
        <end position="210"/>
    </location>
    <ligand>
        <name>ATP</name>
        <dbReference type="ChEBI" id="CHEBI:30616"/>
    </ligand>
</feature>
<feature type="binding site" evidence="2">
    <location>
        <position position="282"/>
    </location>
    <ligand>
        <name>Mg(2+)</name>
        <dbReference type="ChEBI" id="CHEBI:18420"/>
        <label>1</label>
    </ligand>
</feature>
<feature type="binding site" evidence="2">
    <location>
        <position position="294"/>
    </location>
    <ligand>
        <name>Mg(2+)</name>
        <dbReference type="ChEBI" id="CHEBI:18420"/>
        <label>1</label>
    </ligand>
</feature>
<feature type="binding site" evidence="2">
    <location>
        <position position="294"/>
    </location>
    <ligand>
        <name>Mg(2+)</name>
        <dbReference type="ChEBI" id="CHEBI:18420"/>
        <label>2</label>
    </ligand>
</feature>
<feature type="binding site" evidence="2">
    <location>
        <position position="296"/>
    </location>
    <ligand>
        <name>Mg(2+)</name>
        <dbReference type="ChEBI" id="CHEBI:18420"/>
        <label>2</label>
    </ligand>
</feature>
<evidence type="ECO:0000250" key="1"/>
<evidence type="ECO:0000255" key="2">
    <source>
        <dbReference type="HAMAP-Rule" id="MF_00047"/>
    </source>
</evidence>
<protein>
    <recommendedName>
        <fullName evidence="2">D-alanine--D-alanine ligase</fullName>
        <ecNumber evidence="2">6.3.2.4</ecNumber>
    </recommendedName>
    <alternativeName>
        <fullName evidence="2">D-Ala-D-Ala ligase</fullName>
    </alternativeName>
    <alternativeName>
        <fullName evidence="2">D-alanylalanine synthetase</fullName>
    </alternativeName>
</protein>
<organism>
    <name type="scientific">Nitratiruptor sp. (strain SB155-2)</name>
    <dbReference type="NCBI Taxonomy" id="387092"/>
    <lineage>
        <taxon>Bacteria</taxon>
        <taxon>Pseudomonadati</taxon>
        <taxon>Campylobacterota</taxon>
        <taxon>Epsilonproteobacteria</taxon>
        <taxon>Nautiliales</taxon>
        <taxon>Nitratiruptoraceae</taxon>
        <taxon>Nitratiruptor</taxon>
    </lineage>
</organism>
<sequence length="342" mass="38808">MQYAVVFGGKSYEHEISIVSTIAIKDIIPGAIFIFLDGNRDFYLIEKADLKSNYFSSGNYKKSPKLELKKGGFYQKSLLKEKKIPADVVINLVHGADGEDGKLASLLEFFEIDYIGPRIEGSVISYSKLLTKLYAKECGIEVLPYQLLRKQDKKIIDFEYPVIIKPNHLGSSIGVSVVYDSSELEYALDVAFEFDDEVLIEPFIEGIEEYNLAGAKGQTFHFSKIEAVKKEKLLDFEKKYLDFGRSGEVKDASLNETLRLHIRNAFEKIYDPLFSGAIIRIDFFVRDGKLYLNEINPVPGSLANYLFGDFRAVLEDVAKHLPKSKNIVIDYRYINSIQSAKK</sequence>
<dbReference type="EC" id="6.3.2.4" evidence="2"/>
<dbReference type="EMBL" id="AP009178">
    <property type="protein sequence ID" value="BAF70206.1"/>
    <property type="molecule type" value="Genomic_DNA"/>
</dbReference>
<dbReference type="RefSeq" id="WP_012082469.1">
    <property type="nucleotide sequence ID" value="NC_009662.1"/>
</dbReference>
<dbReference type="SMR" id="A6Q3Z7"/>
<dbReference type="FunCoup" id="A6Q3Z7">
    <property type="interactions" value="274"/>
</dbReference>
<dbReference type="STRING" id="387092.NIS_1097"/>
<dbReference type="KEGG" id="nis:NIS_1097"/>
<dbReference type="eggNOG" id="COG1181">
    <property type="taxonomic scope" value="Bacteria"/>
</dbReference>
<dbReference type="HOGENOM" id="CLU_039268_0_2_7"/>
<dbReference type="InParanoid" id="A6Q3Z7"/>
<dbReference type="OrthoDB" id="9813261at2"/>
<dbReference type="UniPathway" id="UPA00219"/>
<dbReference type="Proteomes" id="UP000001118">
    <property type="component" value="Chromosome"/>
</dbReference>
<dbReference type="GO" id="GO:0005737">
    <property type="term" value="C:cytoplasm"/>
    <property type="evidence" value="ECO:0007669"/>
    <property type="project" value="UniProtKB-SubCell"/>
</dbReference>
<dbReference type="GO" id="GO:0005524">
    <property type="term" value="F:ATP binding"/>
    <property type="evidence" value="ECO:0007669"/>
    <property type="project" value="UniProtKB-KW"/>
</dbReference>
<dbReference type="GO" id="GO:0008716">
    <property type="term" value="F:D-alanine-D-alanine ligase activity"/>
    <property type="evidence" value="ECO:0007669"/>
    <property type="project" value="UniProtKB-UniRule"/>
</dbReference>
<dbReference type="GO" id="GO:0046872">
    <property type="term" value="F:metal ion binding"/>
    <property type="evidence" value="ECO:0007669"/>
    <property type="project" value="UniProtKB-KW"/>
</dbReference>
<dbReference type="GO" id="GO:0071555">
    <property type="term" value="P:cell wall organization"/>
    <property type="evidence" value="ECO:0007669"/>
    <property type="project" value="UniProtKB-KW"/>
</dbReference>
<dbReference type="GO" id="GO:0009252">
    <property type="term" value="P:peptidoglycan biosynthetic process"/>
    <property type="evidence" value="ECO:0007669"/>
    <property type="project" value="UniProtKB-UniRule"/>
</dbReference>
<dbReference type="GO" id="GO:0008360">
    <property type="term" value="P:regulation of cell shape"/>
    <property type="evidence" value="ECO:0007669"/>
    <property type="project" value="UniProtKB-KW"/>
</dbReference>
<dbReference type="Gene3D" id="3.40.50.20">
    <property type="match status" value="1"/>
</dbReference>
<dbReference type="Gene3D" id="3.30.1490.20">
    <property type="entry name" value="ATP-grasp fold, A domain"/>
    <property type="match status" value="1"/>
</dbReference>
<dbReference type="Gene3D" id="3.30.470.20">
    <property type="entry name" value="ATP-grasp fold, B domain"/>
    <property type="match status" value="1"/>
</dbReference>
<dbReference type="HAMAP" id="MF_00047">
    <property type="entry name" value="Dala_Dala_lig"/>
    <property type="match status" value="1"/>
</dbReference>
<dbReference type="InterPro" id="IPR011761">
    <property type="entry name" value="ATP-grasp"/>
</dbReference>
<dbReference type="InterPro" id="IPR013815">
    <property type="entry name" value="ATP_grasp_subdomain_1"/>
</dbReference>
<dbReference type="InterPro" id="IPR000291">
    <property type="entry name" value="D-Ala_lig_Van_CS"/>
</dbReference>
<dbReference type="InterPro" id="IPR005905">
    <property type="entry name" value="D_ala_D_ala"/>
</dbReference>
<dbReference type="InterPro" id="IPR011095">
    <property type="entry name" value="Dala_Dala_lig_C"/>
</dbReference>
<dbReference type="InterPro" id="IPR011127">
    <property type="entry name" value="Dala_Dala_lig_N"/>
</dbReference>
<dbReference type="InterPro" id="IPR016185">
    <property type="entry name" value="PreATP-grasp_dom_sf"/>
</dbReference>
<dbReference type="NCBIfam" id="TIGR01205">
    <property type="entry name" value="D_ala_D_alaTIGR"/>
    <property type="match status" value="1"/>
</dbReference>
<dbReference type="NCBIfam" id="NF002527">
    <property type="entry name" value="PRK01966.1-3"/>
    <property type="match status" value="1"/>
</dbReference>
<dbReference type="PANTHER" id="PTHR23132">
    <property type="entry name" value="D-ALANINE--D-ALANINE LIGASE"/>
    <property type="match status" value="1"/>
</dbReference>
<dbReference type="PANTHER" id="PTHR23132:SF23">
    <property type="entry name" value="D-ALANINE--D-ALANINE LIGASE B"/>
    <property type="match status" value="1"/>
</dbReference>
<dbReference type="Pfam" id="PF07478">
    <property type="entry name" value="Dala_Dala_lig_C"/>
    <property type="match status" value="1"/>
</dbReference>
<dbReference type="Pfam" id="PF01820">
    <property type="entry name" value="Dala_Dala_lig_N"/>
    <property type="match status" value="1"/>
</dbReference>
<dbReference type="SUPFAM" id="SSF56059">
    <property type="entry name" value="Glutathione synthetase ATP-binding domain-like"/>
    <property type="match status" value="1"/>
</dbReference>
<dbReference type="SUPFAM" id="SSF52440">
    <property type="entry name" value="PreATP-grasp domain"/>
    <property type="match status" value="1"/>
</dbReference>
<dbReference type="PROSITE" id="PS50975">
    <property type="entry name" value="ATP_GRASP"/>
    <property type="match status" value="1"/>
</dbReference>
<dbReference type="PROSITE" id="PS00843">
    <property type="entry name" value="DALA_DALA_LIGASE_1"/>
    <property type="match status" value="1"/>
</dbReference>
<dbReference type="PROSITE" id="PS00844">
    <property type="entry name" value="DALA_DALA_LIGASE_2"/>
    <property type="match status" value="1"/>
</dbReference>
<name>DDL_NITSB</name>